<sequence length="15" mass="1734">SVDFDSESPRKPEIQ</sequence>
<organism>
    <name type="scientific">Bothrops fonsecai</name>
    <name type="common">Fonseca's lancehead</name>
    <name type="synonym">Rhinocerophis fonsecai</name>
    <dbReference type="NCBI Taxonomy" id="157549"/>
    <lineage>
        <taxon>Eukaryota</taxon>
        <taxon>Metazoa</taxon>
        <taxon>Chordata</taxon>
        <taxon>Craniata</taxon>
        <taxon>Vertebrata</taxon>
        <taxon>Euteleostomi</taxon>
        <taxon>Lepidosauria</taxon>
        <taxon>Squamata</taxon>
        <taxon>Bifurcata</taxon>
        <taxon>Unidentata</taxon>
        <taxon>Episquamata</taxon>
        <taxon>Toxicofera</taxon>
        <taxon>Serpentes</taxon>
        <taxon>Colubroidea</taxon>
        <taxon>Viperidae</taxon>
        <taxon>Crotalinae</taxon>
        <taxon>Bothrops</taxon>
    </lineage>
</organism>
<proteinExistence type="evidence at protein level"/>
<comment type="function">
    <text evidence="1">Weakly blocks contraction of smooth muscle elicited by high potassium-induced depolarization, but does not block caffeine-stimulated contraction. May target voltage-gated calcium channels on smooth muscle (By similarity).</text>
</comment>
<comment type="subcellular location">
    <subcellularLocation>
        <location>Secreted</location>
    </subcellularLocation>
</comment>
<comment type="tissue specificity">
    <text>Expressed by the venom gland.</text>
</comment>
<comment type="PTM">
    <text evidence="1">Contains 8 disulfide bonds.</text>
</comment>
<comment type="similarity">
    <text evidence="2">Belongs to the CRISP family.</text>
</comment>
<dbReference type="GO" id="GO:0005576">
    <property type="term" value="C:extracellular region"/>
    <property type="evidence" value="ECO:0007669"/>
    <property type="project" value="UniProtKB-SubCell"/>
</dbReference>
<dbReference type="GO" id="GO:0005246">
    <property type="term" value="F:calcium channel regulator activity"/>
    <property type="evidence" value="ECO:0007669"/>
    <property type="project" value="UniProtKB-KW"/>
</dbReference>
<dbReference type="GO" id="GO:0090729">
    <property type="term" value="F:toxin activity"/>
    <property type="evidence" value="ECO:0007669"/>
    <property type="project" value="UniProtKB-KW"/>
</dbReference>
<accession>P0DMG6</accession>
<name>CRVP_BOTFO</name>
<reference key="1">
    <citation type="journal article" date="2008" name="J. Proteomics">
        <title>Snake venomics of the Brazilian pitvipers Bothrops cotiara and Bothrops fonsecai. Identification of taxonomy markers.</title>
        <authorList>
            <person name="Tashima A.K."/>
            <person name="Sanz L."/>
            <person name="Camargo A.C."/>
            <person name="Serrano S.M."/>
            <person name="Calvete J.J."/>
        </authorList>
    </citation>
    <scope>PROTEIN SEQUENCE</scope>
    <scope>IDENTIFICATION BY MASS SPECTROMETRY</scope>
    <source>
        <tissue>Venom</tissue>
    </source>
</reference>
<protein>
    <recommendedName>
        <fullName>Cysteine-rich venom protein Bfon12</fullName>
        <shortName>CRVP</shortName>
    </recommendedName>
    <alternativeName>
        <fullName>Cysteine-rich secretory protein</fullName>
        <shortName>CRISP</shortName>
    </alternativeName>
</protein>
<evidence type="ECO:0000250" key="1"/>
<evidence type="ECO:0000305" key="2"/>
<keyword id="KW-0108">Calcium channel impairing toxin</keyword>
<keyword id="KW-0903">Direct protein sequencing</keyword>
<keyword id="KW-1015">Disulfide bond</keyword>
<keyword id="KW-0872">Ion channel impairing toxin</keyword>
<keyword id="KW-0528">Neurotoxin</keyword>
<keyword id="KW-0964">Secreted</keyword>
<keyword id="KW-0800">Toxin</keyword>
<feature type="chain" id="PRO_0000428806" description="Cysteine-rich venom protein Bfon12">
    <location>
        <begin position="1"/>
        <end position="15" status="greater than"/>
    </location>
</feature>
<feature type="non-terminal residue">
    <location>
        <position position="15"/>
    </location>
</feature>